<dbReference type="EMBL" id="BA000030">
    <property type="protein sequence ID" value="BAC73997.1"/>
    <property type="molecule type" value="Genomic_DNA"/>
</dbReference>
<dbReference type="RefSeq" id="WP_010987687.1">
    <property type="nucleotide sequence ID" value="NZ_JZJK01000089.1"/>
</dbReference>
<dbReference type="SMR" id="Q829X3"/>
<dbReference type="GeneID" id="41543361"/>
<dbReference type="KEGG" id="sma:SAVERM_6286"/>
<dbReference type="eggNOG" id="COG0178">
    <property type="taxonomic scope" value="Bacteria"/>
</dbReference>
<dbReference type="HOGENOM" id="CLU_001370_0_2_11"/>
<dbReference type="OrthoDB" id="9809851at2"/>
<dbReference type="Proteomes" id="UP000000428">
    <property type="component" value="Chromosome"/>
</dbReference>
<dbReference type="GO" id="GO:0005737">
    <property type="term" value="C:cytoplasm"/>
    <property type="evidence" value="ECO:0007669"/>
    <property type="project" value="UniProtKB-SubCell"/>
</dbReference>
<dbReference type="GO" id="GO:0009380">
    <property type="term" value="C:excinuclease repair complex"/>
    <property type="evidence" value="ECO:0007669"/>
    <property type="project" value="InterPro"/>
</dbReference>
<dbReference type="GO" id="GO:0005524">
    <property type="term" value="F:ATP binding"/>
    <property type="evidence" value="ECO:0007669"/>
    <property type="project" value="UniProtKB-UniRule"/>
</dbReference>
<dbReference type="GO" id="GO:0016887">
    <property type="term" value="F:ATP hydrolysis activity"/>
    <property type="evidence" value="ECO:0007669"/>
    <property type="project" value="InterPro"/>
</dbReference>
<dbReference type="GO" id="GO:0003677">
    <property type="term" value="F:DNA binding"/>
    <property type="evidence" value="ECO:0007669"/>
    <property type="project" value="UniProtKB-UniRule"/>
</dbReference>
<dbReference type="GO" id="GO:0009381">
    <property type="term" value="F:excinuclease ABC activity"/>
    <property type="evidence" value="ECO:0007669"/>
    <property type="project" value="UniProtKB-UniRule"/>
</dbReference>
<dbReference type="GO" id="GO:0008270">
    <property type="term" value="F:zinc ion binding"/>
    <property type="evidence" value="ECO:0007669"/>
    <property type="project" value="UniProtKB-UniRule"/>
</dbReference>
<dbReference type="GO" id="GO:0006289">
    <property type="term" value="P:nucleotide-excision repair"/>
    <property type="evidence" value="ECO:0007669"/>
    <property type="project" value="UniProtKB-UniRule"/>
</dbReference>
<dbReference type="GO" id="GO:0009432">
    <property type="term" value="P:SOS response"/>
    <property type="evidence" value="ECO:0007669"/>
    <property type="project" value="UniProtKB-UniRule"/>
</dbReference>
<dbReference type="CDD" id="cd03270">
    <property type="entry name" value="ABC_UvrA_I"/>
    <property type="match status" value="1"/>
</dbReference>
<dbReference type="CDD" id="cd03271">
    <property type="entry name" value="ABC_UvrA_II"/>
    <property type="match status" value="1"/>
</dbReference>
<dbReference type="FunFam" id="1.20.1580.10:FF:000002">
    <property type="entry name" value="UvrABC system protein A"/>
    <property type="match status" value="1"/>
</dbReference>
<dbReference type="FunFam" id="1.20.1580.10:FF:000003">
    <property type="entry name" value="UvrABC system protein A"/>
    <property type="match status" value="1"/>
</dbReference>
<dbReference type="Gene3D" id="1.10.8.280">
    <property type="entry name" value="ABC transporter ATPase domain-like"/>
    <property type="match status" value="1"/>
</dbReference>
<dbReference type="Gene3D" id="1.20.1580.10">
    <property type="entry name" value="ABC transporter ATPase like domain"/>
    <property type="match status" value="2"/>
</dbReference>
<dbReference type="Gene3D" id="3.30.1490.20">
    <property type="entry name" value="ATP-grasp fold, A domain"/>
    <property type="match status" value="1"/>
</dbReference>
<dbReference type="Gene3D" id="3.40.50.300">
    <property type="entry name" value="P-loop containing nucleotide triphosphate hydrolases"/>
    <property type="match status" value="2"/>
</dbReference>
<dbReference type="HAMAP" id="MF_00205">
    <property type="entry name" value="UvrA"/>
    <property type="match status" value="1"/>
</dbReference>
<dbReference type="InterPro" id="IPR003439">
    <property type="entry name" value="ABC_transporter-like_ATP-bd"/>
</dbReference>
<dbReference type="InterPro" id="IPR017871">
    <property type="entry name" value="ABC_transporter-like_CS"/>
</dbReference>
<dbReference type="InterPro" id="IPR013815">
    <property type="entry name" value="ATP_grasp_subdomain_1"/>
</dbReference>
<dbReference type="InterPro" id="IPR027417">
    <property type="entry name" value="P-loop_NTPase"/>
</dbReference>
<dbReference type="InterPro" id="IPR004602">
    <property type="entry name" value="UvrA"/>
</dbReference>
<dbReference type="InterPro" id="IPR041552">
    <property type="entry name" value="UvrA_DNA-bd"/>
</dbReference>
<dbReference type="InterPro" id="IPR041102">
    <property type="entry name" value="UvrA_inter"/>
</dbReference>
<dbReference type="NCBIfam" id="NF001503">
    <property type="entry name" value="PRK00349.1"/>
    <property type="match status" value="1"/>
</dbReference>
<dbReference type="NCBIfam" id="TIGR00630">
    <property type="entry name" value="uvra"/>
    <property type="match status" value="1"/>
</dbReference>
<dbReference type="PANTHER" id="PTHR43152">
    <property type="entry name" value="UVRABC SYSTEM PROTEIN A"/>
    <property type="match status" value="1"/>
</dbReference>
<dbReference type="PANTHER" id="PTHR43152:SF3">
    <property type="entry name" value="UVRABC SYSTEM PROTEIN A"/>
    <property type="match status" value="1"/>
</dbReference>
<dbReference type="Pfam" id="PF00005">
    <property type="entry name" value="ABC_tran"/>
    <property type="match status" value="1"/>
</dbReference>
<dbReference type="Pfam" id="PF17755">
    <property type="entry name" value="UvrA_DNA-bind"/>
    <property type="match status" value="1"/>
</dbReference>
<dbReference type="Pfam" id="PF17760">
    <property type="entry name" value="UvrA_inter"/>
    <property type="match status" value="1"/>
</dbReference>
<dbReference type="SUPFAM" id="SSF52540">
    <property type="entry name" value="P-loop containing nucleoside triphosphate hydrolases"/>
    <property type="match status" value="2"/>
</dbReference>
<dbReference type="PROSITE" id="PS00211">
    <property type="entry name" value="ABC_TRANSPORTER_1"/>
    <property type="match status" value="2"/>
</dbReference>
<dbReference type="PROSITE" id="PS50893">
    <property type="entry name" value="ABC_TRANSPORTER_2"/>
    <property type="match status" value="1"/>
</dbReference>
<accession>Q829X3</accession>
<name>UVRA_STRAW</name>
<reference key="1">
    <citation type="journal article" date="2001" name="Proc. Natl. Acad. Sci. U.S.A.">
        <title>Genome sequence of an industrial microorganism Streptomyces avermitilis: deducing the ability of producing secondary metabolites.</title>
        <authorList>
            <person name="Omura S."/>
            <person name="Ikeda H."/>
            <person name="Ishikawa J."/>
            <person name="Hanamoto A."/>
            <person name="Takahashi C."/>
            <person name="Shinose M."/>
            <person name="Takahashi Y."/>
            <person name="Horikawa H."/>
            <person name="Nakazawa H."/>
            <person name="Osonoe T."/>
            <person name="Kikuchi H."/>
            <person name="Shiba T."/>
            <person name="Sakaki Y."/>
            <person name="Hattori M."/>
        </authorList>
    </citation>
    <scope>NUCLEOTIDE SEQUENCE [LARGE SCALE GENOMIC DNA]</scope>
    <source>
        <strain>ATCC 31267 / DSM 46492 / JCM 5070 / NBRC 14893 / NCIMB 12804 / NRRL 8165 / MA-4680</strain>
    </source>
</reference>
<reference key="2">
    <citation type="journal article" date="2003" name="Nat. Biotechnol.">
        <title>Complete genome sequence and comparative analysis of the industrial microorganism Streptomyces avermitilis.</title>
        <authorList>
            <person name="Ikeda H."/>
            <person name="Ishikawa J."/>
            <person name="Hanamoto A."/>
            <person name="Shinose M."/>
            <person name="Kikuchi H."/>
            <person name="Shiba T."/>
            <person name="Sakaki Y."/>
            <person name="Hattori M."/>
            <person name="Omura S."/>
        </authorList>
    </citation>
    <scope>NUCLEOTIDE SEQUENCE [LARGE SCALE GENOMIC DNA]</scope>
    <source>
        <strain>ATCC 31267 / DSM 46492 / JCM 5070 / NBRC 14893 / NCIMB 12804 / NRRL 8165 / MA-4680</strain>
    </source>
</reference>
<proteinExistence type="inferred from homology"/>
<gene>
    <name evidence="1" type="primary">uvrA</name>
    <name type="ordered locus">SAV_6286</name>
</gene>
<evidence type="ECO:0000255" key="1">
    <source>
        <dbReference type="HAMAP-Rule" id="MF_00205"/>
    </source>
</evidence>
<evidence type="ECO:0000256" key="2">
    <source>
        <dbReference type="SAM" id="MobiDB-lite"/>
    </source>
</evidence>
<protein>
    <recommendedName>
        <fullName evidence="1">UvrABC system protein A</fullName>
        <shortName evidence="1">UvrA protein</shortName>
    </recommendedName>
    <alternativeName>
        <fullName evidence="1">Excinuclease ABC subunit A</fullName>
    </alternativeName>
</protein>
<organism>
    <name type="scientific">Streptomyces avermitilis (strain ATCC 31267 / DSM 46492 / JCM 5070 / NBRC 14893 / NCIMB 12804 / NRRL 8165 / MA-4680)</name>
    <dbReference type="NCBI Taxonomy" id="227882"/>
    <lineage>
        <taxon>Bacteria</taxon>
        <taxon>Bacillati</taxon>
        <taxon>Actinomycetota</taxon>
        <taxon>Actinomycetes</taxon>
        <taxon>Kitasatosporales</taxon>
        <taxon>Streptomycetaceae</taxon>
        <taxon>Streptomyces</taxon>
    </lineage>
</organism>
<sequence length="1009" mass="110787">MADRLIVRGAREHNLKNVSLDLPRDSLIVFTGLSGSGKSSLAFDTIFAEGQRRYVESLSSYARQFLGQMDKPDVDFIEGLSPAVSIDQKSTSRNPRSTVGTITEVYDYLRLLFARIGKPHCPECGRPISRQSPQAIVDKVLELPEGSRFQVLSPLVRERKGEFVDLFADLQTKGYSRARVDGQTIQLSDPPTLKKQEKHTIEVVIDRLTVKEGAKRRLTDSVETALGLAGGMVVLDFVDLPEDDPERERMYSEHLYCPYDDLSFEELEPRSFSFNSPFGACPDCSGIGTRMEVDAELIVPDEEKSLDEGAIHPWSHGHTKDYFGRLIGALADALGFRTDIPFAGLPQRAKKALLYGHKTQIEVRYRNRYGRERVYTTPFEGAVPFVKRRHSEAESDASRERFEGYMREVPCPTCQGTRLKPLVLAVTVMEKSIAEVAAMSISDCADFLGKLKLNARDKKIAERVLKEVNERLRFLVDVGLDYLSLNRAAGTLSGGEAQRIRLATQIGSGLVGVLYVLDEPSIGLHQRDNHRLIETLVRLRDMGNTLIVVEHDEDTIKVADWIVDIGPGAGEHGGKVVHSGSLKELLANAESQTGQYLSGKKSIPLPDIRRPRDPSRQLTVHGARENNLQDIDVSFPLGVLTAVTGVSGSGKSTLVNDILYTHLARELNGARSVPGRHTRVDGDDLVDKVVHVDQSPIGRTPRSNPATYTGVFDHVRKLFAETTEAKVRGYLPGRFSFNVKGGRCENCSGDGTIKIEMNFLPDVYVPCEVCHGARYNRETLEVHYKGKSIADVLNMPIEEAMHFFEAVPAIARHLNTLNDVGLGYVRLGQSATTLSGGEAQRVKLASELQRRSTGRTVYVLDEPTTGLHFEDISKLLVVLSGLVDKGNTVIVIEHNLDVIKTADWVVDMGPEGGAGGGLVVAEGTPEEVAGVPTSHTGKFLREILDADRISDAASVKAPRKTAARKTAAAKSTTKKTATVRTTNNTATKKAAAVTKKTAPAKKTTRARKA</sequence>
<keyword id="KW-0067">ATP-binding</keyword>
<keyword id="KW-0963">Cytoplasm</keyword>
<keyword id="KW-0227">DNA damage</keyword>
<keyword id="KW-0228">DNA excision</keyword>
<keyword id="KW-0234">DNA repair</keyword>
<keyword id="KW-0238">DNA-binding</keyword>
<keyword id="KW-0267">Excision nuclease</keyword>
<keyword id="KW-0479">Metal-binding</keyword>
<keyword id="KW-0547">Nucleotide-binding</keyword>
<keyword id="KW-1185">Reference proteome</keyword>
<keyword id="KW-0677">Repeat</keyword>
<keyword id="KW-0742">SOS response</keyword>
<keyword id="KW-0862">Zinc</keyword>
<keyword id="KW-0863">Zinc-finger</keyword>
<feature type="chain" id="PRO_0000093097" description="UvrABC system protein A">
    <location>
        <begin position="1"/>
        <end position="1009"/>
    </location>
</feature>
<feature type="domain" description="ABC transporter 1" evidence="1">
    <location>
        <begin position="314"/>
        <end position="592"/>
    </location>
</feature>
<feature type="domain" description="ABC transporter 2" evidence="1">
    <location>
        <begin position="612"/>
        <end position="941"/>
    </location>
</feature>
<feature type="zinc finger region" description="C4-type" evidence="1">
    <location>
        <begin position="744"/>
        <end position="770"/>
    </location>
</feature>
<feature type="region of interest" description="Disordered" evidence="2">
    <location>
        <begin position="956"/>
        <end position="1009"/>
    </location>
</feature>
<feature type="compositionally biased region" description="Low complexity" evidence="2">
    <location>
        <begin position="964"/>
        <end position="997"/>
    </location>
</feature>
<feature type="compositionally biased region" description="Basic residues" evidence="2">
    <location>
        <begin position="998"/>
        <end position="1009"/>
    </location>
</feature>
<feature type="binding site" evidence="1">
    <location>
        <begin position="32"/>
        <end position="39"/>
    </location>
    <ligand>
        <name>ATP</name>
        <dbReference type="ChEBI" id="CHEBI:30616"/>
    </ligand>
</feature>
<feature type="binding site" evidence="1">
    <location>
        <begin position="645"/>
        <end position="652"/>
    </location>
    <ligand>
        <name>ATP</name>
        <dbReference type="ChEBI" id="CHEBI:30616"/>
    </ligand>
</feature>
<comment type="function">
    <text evidence="1">The UvrABC repair system catalyzes the recognition and processing of DNA lesions. UvrA is an ATPase and a DNA-binding protein. A damage recognition complex composed of 2 UvrA and 2 UvrB subunits scans DNA for abnormalities. When the presence of a lesion has been verified by UvrB, the UvrA molecules dissociate.</text>
</comment>
<comment type="subunit">
    <text evidence="1">Forms a heterotetramer with UvrB during the search for lesions.</text>
</comment>
<comment type="subcellular location">
    <subcellularLocation>
        <location evidence="1">Cytoplasm</location>
    </subcellularLocation>
</comment>
<comment type="similarity">
    <text evidence="1">Belongs to the ABC transporter superfamily. UvrA family.</text>
</comment>